<protein>
    <recommendedName>
        <fullName evidence="1">Large ribosomal subunit protein uL16</fullName>
    </recommendedName>
    <alternativeName>
        <fullName evidence="2">50S ribosomal protein L16</fullName>
    </alternativeName>
</protein>
<sequence>MLSPRRTKFRKQQRGRMGGLAHRGSTLNFGDFALQAQEPAWITSRQIEASRRAMTRYIRRGGKIWIRIFPDKPVTMRPAETRMGSGKGNPEFWVAVVKPGRILFEIAGVTEEIAREAMRLAAYKLPIKTKFIVRSQVVEEQE</sequence>
<keyword id="KW-0687">Ribonucleoprotein</keyword>
<keyword id="KW-0689">Ribosomal protein</keyword>
<keyword id="KW-0694">RNA-binding</keyword>
<keyword id="KW-0699">rRNA-binding</keyword>
<keyword id="KW-0820">tRNA-binding</keyword>
<reference key="1">
    <citation type="journal article" date="2014" name="Stand. Genomic Sci.">
        <title>Complete genome sequence of Anabaena variabilis ATCC 29413.</title>
        <authorList>
            <person name="Thiel T."/>
            <person name="Pratte B.S."/>
            <person name="Zhong J."/>
            <person name="Goodwin L."/>
            <person name="Copeland A."/>
            <person name="Lucas S."/>
            <person name="Han C."/>
            <person name="Pitluck S."/>
            <person name="Land M.L."/>
            <person name="Kyrpides N.C."/>
            <person name="Woyke T."/>
        </authorList>
    </citation>
    <scope>NUCLEOTIDE SEQUENCE [LARGE SCALE GENOMIC DNA]</scope>
    <source>
        <strain>ATCC 29413 / PCC 7937</strain>
    </source>
</reference>
<feature type="chain" id="PRO_0000251614" description="Large ribosomal subunit protein uL16">
    <location>
        <begin position="1"/>
        <end position="142"/>
    </location>
</feature>
<evidence type="ECO:0000255" key="1">
    <source>
        <dbReference type="HAMAP-Rule" id="MF_01342"/>
    </source>
</evidence>
<evidence type="ECO:0000305" key="2"/>
<proteinExistence type="inferred from homology"/>
<name>RL16_TRIV2</name>
<gene>
    <name evidence="1" type="primary">rplP</name>
    <name evidence="1" type="synonym">rpl16</name>
    <name type="ordered locus">Ava_0698</name>
</gene>
<dbReference type="EMBL" id="CP000117">
    <property type="protein sequence ID" value="ABA20322.1"/>
    <property type="molecule type" value="Genomic_DNA"/>
</dbReference>
<dbReference type="RefSeq" id="WP_010998346.1">
    <property type="nucleotide sequence ID" value="NC_007413.1"/>
</dbReference>
<dbReference type="SMR" id="Q3MFB4"/>
<dbReference type="STRING" id="240292.Ava_0698"/>
<dbReference type="GeneID" id="58723356"/>
<dbReference type="KEGG" id="ava:Ava_0698"/>
<dbReference type="eggNOG" id="COG0197">
    <property type="taxonomic scope" value="Bacteria"/>
</dbReference>
<dbReference type="HOGENOM" id="CLU_078858_2_1_3"/>
<dbReference type="Proteomes" id="UP000002533">
    <property type="component" value="Chromosome"/>
</dbReference>
<dbReference type="GO" id="GO:0022625">
    <property type="term" value="C:cytosolic large ribosomal subunit"/>
    <property type="evidence" value="ECO:0007669"/>
    <property type="project" value="TreeGrafter"/>
</dbReference>
<dbReference type="GO" id="GO:0019843">
    <property type="term" value="F:rRNA binding"/>
    <property type="evidence" value="ECO:0007669"/>
    <property type="project" value="UniProtKB-UniRule"/>
</dbReference>
<dbReference type="GO" id="GO:0003735">
    <property type="term" value="F:structural constituent of ribosome"/>
    <property type="evidence" value="ECO:0007669"/>
    <property type="project" value="InterPro"/>
</dbReference>
<dbReference type="GO" id="GO:0000049">
    <property type="term" value="F:tRNA binding"/>
    <property type="evidence" value="ECO:0007669"/>
    <property type="project" value="UniProtKB-KW"/>
</dbReference>
<dbReference type="GO" id="GO:0006412">
    <property type="term" value="P:translation"/>
    <property type="evidence" value="ECO:0007669"/>
    <property type="project" value="UniProtKB-UniRule"/>
</dbReference>
<dbReference type="CDD" id="cd01433">
    <property type="entry name" value="Ribosomal_L16_L10e"/>
    <property type="match status" value="1"/>
</dbReference>
<dbReference type="FunFam" id="3.90.1170.10:FF:000001">
    <property type="entry name" value="50S ribosomal protein L16"/>
    <property type="match status" value="1"/>
</dbReference>
<dbReference type="Gene3D" id="3.90.1170.10">
    <property type="entry name" value="Ribosomal protein L10e/L16"/>
    <property type="match status" value="1"/>
</dbReference>
<dbReference type="HAMAP" id="MF_01342">
    <property type="entry name" value="Ribosomal_uL16"/>
    <property type="match status" value="1"/>
</dbReference>
<dbReference type="InterPro" id="IPR047873">
    <property type="entry name" value="Ribosomal_uL16"/>
</dbReference>
<dbReference type="InterPro" id="IPR000114">
    <property type="entry name" value="Ribosomal_uL16_bact-type"/>
</dbReference>
<dbReference type="InterPro" id="IPR020798">
    <property type="entry name" value="Ribosomal_uL16_CS"/>
</dbReference>
<dbReference type="InterPro" id="IPR016180">
    <property type="entry name" value="Ribosomal_uL16_dom"/>
</dbReference>
<dbReference type="InterPro" id="IPR036920">
    <property type="entry name" value="Ribosomal_uL16_sf"/>
</dbReference>
<dbReference type="NCBIfam" id="TIGR01164">
    <property type="entry name" value="rplP_bact"/>
    <property type="match status" value="1"/>
</dbReference>
<dbReference type="PANTHER" id="PTHR12220">
    <property type="entry name" value="50S/60S RIBOSOMAL PROTEIN L16"/>
    <property type="match status" value="1"/>
</dbReference>
<dbReference type="PANTHER" id="PTHR12220:SF13">
    <property type="entry name" value="LARGE RIBOSOMAL SUBUNIT PROTEIN UL16M"/>
    <property type="match status" value="1"/>
</dbReference>
<dbReference type="Pfam" id="PF00252">
    <property type="entry name" value="Ribosomal_L16"/>
    <property type="match status" value="1"/>
</dbReference>
<dbReference type="PRINTS" id="PR00060">
    <property type="entry name" value="RIBOSOMALL16"/>
</dbReference>
<dbReference type="SUPFAM" id="SSF54686">
    <property type="entry name" value="Ribosomal protein L16p/L10e"/>
    <property type="match status" value="1"/>
</dbReference>
<dbReference type="PROSITE" id="PS00586">
    <property type="entry name" value="RIBOSOMAL_L16_1"/>
    <property type="match status" value="1"/>
</dbReference>
<dbReference type="PROSITE" id="PS00701">
    <property type="entry name" value="RIBOSOMAL_L16_2"/>
    <property type="match status" value="1"/>
</dbReference>
<organism>
    <name type="scientific">Trichormus variabilis (strain ATCC 29413 / PCC 7937)</name>
    <name type="common">Anabaena variabilis</name>
    <dbReference type="NCBI Taxonomy" id="240292"/>
    <lineage>
        <taxon>Bacteria</taxon>
        <taxon>Bacillati</taxon>
        <taxon>Cyanobacteriota</taxon>
        <taxon>Cyanophyceae</taxon>
        <taxon>Nostocales</taxon>
        <taxon>Nostocaceae</taxon>
        <taxon>Trichormus</taxon>
    </lineage>
</organism>
<accession>Q3MFB4</accession>
<comment type="function">
    <text evidence="1">Binds 23S rRNA and is also seen to make contacts with the A and possibly P site tRNAs.</text>
</comment>
<comment type="subunit">
    <text evidence="1">Part of the 50S ribosomal subunit.</text>
</comment>
<comment type="similarity">
    <text evidence="1">Belongs to the universal ribosomal protein uL16 family.</text>
</comment>